<protein>
    <recommendedName>
        <fullName evidence="1">Triosephosphate isomerase</fullName>
        <shortName evidence="1">TIM</shortName>
        <shortName evidence="1">TPI</shortName>
        <ecNumber evidence="1">5.3.1.1</ecNumber>
    </recommendedName>
    <alternativeName>
        <fullName evidence="1">Triose-phosphate isomerase</fullName>
    </alternativeName>
</protein>
<accession>Q3B2V8</accession>
<gene>
    <name evidence="1" type="primary">tpiA</name>
    <name type="ordered locus">Plut_1464</name>
</gene>
<name>TPIS_CHLL3</name>
<reference key="1">
    <citation type="submission" date="2005-08" db="EMBL/GenBank/DDBJ databases">
        <title>Complete sequence of Pelodictyon luteolum DSM 273.</title>
        <authorList>
            <consortium name="US DOE Joint Genome Institute"/>
            <person name="Copeland A."/>
            <person name="Lucas S."/>
            <person name="Lapidus A."/>
            <person name="Barry K."/>
            <person name="Detter J.C."/>
            <person name="Glavina T."/>
            <person name="Hammon N."/>
            <person name="Israni S."/>
            <person name="Pitluck S."/>
            <person name="Bryant D."/>
            <person name="Schmutz J."/>
            <person name="Larimer F."/>
            <person name="Land M."/>
            <person name="Kyrpides N."/>
            <person name="Ivanova N."/>
            <person name="Richardson P."/>
        </authorList>
    </citation>
    <scope>NUCLEOTIDE SEQUENCE [LARGE SCALE GENOMIC DNA]</scope>
    <source>
        <strain>DSM 273 / BCRC 81028 / 2530</strain>
    </source>
</reference>
<feature type="chain" id="PRO_0000307522" description="Triosephosphate isomerase">
    <location>
        <begin position="1"/>
        <end position="250"/>
    </location>
</feature>
<feature type="active site" description="Electrophile" evidence="1">
    <location>
        <position position="96"/>
    </location>
</feature>
<feature type="active site" description="Proton acceptor" evidence="1">
    <location>
        <position position="166"/>
    </location>
</feature>
<feature type="binding site" evidence="1">
    <location>
        <begin position="9"/>
        <end position="11"/>
    </location>
    <ligand>
        <name>substrate</name>
    </ligand>
</feature>
<feature type="binding site" evidence="1">
    <location>
        <position position="172"/>
    </location>
    <ligand>
        <name>substrate</name>
    </ligand>
</feature>
<feature type="binding site" evidence="1">
    <location>
        <position position="212"/>
    </location>
    <ligand>
        <name>substrate</name>
    </ligand>
</feature>
<feature type="binding site" evidence="1">
    <location>
        <begin position="233"/>
        <end position="234"/>
    </location>
    <ligand>
        <name>substrate</name>
    </ligand>
</feature>
<evidence type="ECO:0000255" key="1">
    <source>
        <dbReference type="HAMAP-Rule" id="MF_00147"/>
    </source>
</evidence>
<keyword id="KW-0963">Cytoplasm</keyword>
<keyword id="KW-0312">Gluconeogenesis</keyword>
<keyword id="KW-0324">Glycolysis</keyword>
<keyword id="KW-0413">Isomerase</keyword>
<keyword id="KW-1185">Reference proteome</keyword>
<sequence>MRRKIVVGNWKMNKTVAESTALATAVIAALGDGCSACEAGIAPTYPALDAVGRALEGSGIALVAQNCHYEDDGAYTGEVSTGMLKAVGCSYVIIGHSERRQYFGETDETVNLRIKKVLASGMKVILCVGETLAEREEGVTGTVVSRQVTEGLKGVADITDLVIAYEPVWAIGTGKTASSDQAQEVHRLIRDTVKGMYGAEVSEAVRIQYGGSVKASNAEELFAMPDIDGGLIGGASLNAADFAAIVKAGC</sequence>
<proteinExistence type="inferred from homology"/>
<dbReference type="EC" id="5.3.1.1" evidence="1"/>
<dbReference type="EMBL" id="CP000096">
    <property type="protein sequence ID" value="ABB24323.1"/>
    <property type="molecule type" value="Genomic_DNA"/>
</dbReference>
<dbReference type="RefSeq" id="WP_011358195.1">
    <property type="nucleotide sequence ID" value="NC_007512.1"/>
</dbReference>
<dbReference type="SMR" id="Q3B2V8"/>
<dbReference type="STRING" id="319225.Plut_1464"/>
<dbReference type="KEGG" id="plt:Plut_1464"/>
<dbReference type="eggNOG" id="COG0149">
    <property type="taxonomic scope" value="Bacteria"/>
</dbReference>
<dbReference type="HOGENOM" id="CLU_024251_2_3_10"/>
<dbReference type="OrthoDB" id="9809429at2"/>
<dbReference type="UniPathway" id="UPA00109">
    <property type="reaction ID" value="UER00189"/>
</dbReference>
<dbReference type="UniPathway" id="UPA00138"/>
<dbReference type="Proteomes" id="UP000002709">
    <property type="component" value="Chromosome"/>
</dbReference>
<dbReference type="GO" id="GO:0005829">
    <property type="term" value="C:cytosol"/>
    <property type="evidence" value="ECO:0007669"/>
    <property type="project" value="TreeGrafter"/>
</dbReference>
<dbReference type="GO" id="GO:0004807">
    <property type="term" value="F:triose-phosphate isomerase activity"/>
    <property type="evidence" value="ECO:0007669"/>
    <property type="project" value="UniProtKB-UniRule"/>
</dbReference>
<dbReference type="GO" id="GO:0006094">
    <property type="term" value="P:gluconeogenesis"/>
    <property type="evidence" value="ECO:0007669"/>
    <property type="project" value="UniProtKB-UniRule"/>
</dbReference>
<dbReference type="GO" id="GO:0046166">
    <property type="term" value="P:glyceraldehyde-3-phosphate biosynthetic process"/>
    <property type="evidence" value="ECO:0007669"/>
    <property type="project" value="TreeGrafter"/>
</dbReference>
<dbReference type="GO" id="GO:0019563">
    <property type="term" value="P:glycerol catabolic process"/>
    <property type="evidence" value="ECO:0007669"/>
    <property type="project" value="TreeGrafter"/>
</dbReference>
<dbReference type="GO" id="GO:0006096">
    <property type="term" value="P:glycolytic process"/>
    <property type="evidence" value="ECO:0007669"/>
    <property type="project" value="UniProtKB-UniRule"/>
</dbReference>
<dbReference type="CDD" id="cd00311">
    <property type="entry name" value="TIM"/>
    <property type="match status" value="1"/>
</dbReference>
<dbReference type="FunFam" id="3.20.20.70:FF:000016">
    <property type="entry name" value="Triosephosphate isomerase"/>
    <property type="match status" value="1"/>
</dbReference>
<dbReference type="Gene3D" id="3.20.20.70">
    <property type="entry name" value="Aldolase class I"/>
    <property type="match status" value="1"/>
</dbReference>
<dbReference type="HAMAP" id="MF_00147_B">
    <property type="entry name" value="TIM_B"/>
    <property type="match status" value="1"/>
</dbReference>
<dbReference type="InterPro" id="IPR013785">
    <property type="entry name" value="Aldolase_TIM"/>
</dbReference>
<dbReference type="InterPro" id="IPR035990">
    <property type="entry name" value="TIM_sf"/>
</dbReference>
<dbReference type="InterPro" id="IPR022896">
    <property type="entry name" value="TrioseP_Isoase_bac/euk"/>
</dbReference>
<dbReference type="InterPro" id="IPR000652">
    <property type="entry name" value="Triosephosphate_isomerase"/>
</dbReference>
<dbReference type="InterPro" id="IPR020861">
    <property type="entry name" value="Triosephosphate_isomerase_AS"/>
</dbReference>
<dbReference type="NCBIfam" id="TIGR00419">
    <property type="entry name" value="tim"/>
    <property type="match status" value="1"/>
</dbReference>
<dbReference type="PANTHER" id="PTHR21139">
    <property type="entry name" value="TRIOSEPHOSPHATE ISOMERASE"/>
    <property type="match status" value="1"/>
</dbReference>
<dbReference type="PANTHER" id="PTHR21139:SF42">
    <property type="entry name" value="TRIOSEPHOSPHATE ISOMERASE"/>
    <property type="match status" value="1"/>
</dbReference>
<dbReference type="Pfam" id="PF00121">
    <property type="entry name" value="TIM"/>
    <property type="match status" value="1"/>
</dbReference>
<dbReference type="SUPFAM" id="SSF51351">
    <property type="entry name" value="Triosephosphate isomerase (TIM)"/>
    <property type="match status" value="1"/>
</dbReference>
<dbReference type="PROSITE" id="PS00171">
    <property type="entry name" value="TIM_1"/>
    <property type="match status" value="1"/>
</dbReference>
<dbReference type="PROSITE" id="PS51440">
    <property type="entry name" value="TIM_2"/>
    <property type="match status" value="1"/>
</dbReference>
<organism>
    <name type="scientific">Chlorobium luteolum (strain DSM 273 / BCRC 81028 / 2530)</name>
    <name type="common">Pelodictyon luteolum</name>
    <dbReference type="NCBI Taxonomy" id="319225"/>
    <lineage>
        <taxon>Bacteria</taxon>
        <taxon>Pseudomonadati</taxon>
        <taxon>Chlorobiota</taxon>
        <taxon>Chlorobiia</taxon>
        <taxon>Chlorobiales</taxon>
        <taxon>Chlorobiaceae</taxon>
        <taxon>Chlorobium/Pelodictyon group</taxon>
        <taxon>Pelodictyon</taxon>
    </lineage>
</organism>
<comment type="function">
    <text evidence="1">Involved in the gluconeogenesis. Catalyzes stereospecifically the conversion of dihydroxyacetone phosphate (DHAP) to D-glyceraldehyde-3-phosphate (G3P).</text>
</comment>
<comment type="catalytic activity">
    <reaction evidence="1">
        <text>D-glyceraldehyde 3-phosphate = dihydroxyacetone phosphate</text>
        <dbReference type="Rhea" id="RHEA:18585"/>
        <dbReference type="ChEBI" id="CHEBI:57642"/>
        <dbReference type="ChEBI" id="CHEBI:59776"/>
        <dbReference type="EC" id="5.3.1.1"/>
    </reaction>
</comment>
<comment type="pathway">
    <text evidence="1">Carbohydrate biosynthesis; gluconeogenesis.</text>
</comment>
<comment type="pathway">
    <text evidence="1">Carbohydrate degradation; glycolysis; D-glyceraldehyde 3-phosphate from glycerone phosphate: step 1/1.</text>
</comment>
<comment type="subunit">
    <text evidence="1">Homodimer.</text>
</comment>
<comment type="subcellular location">
    <subcellularLocation>
        <location evidence="1">Cytoplasm</location>
    </subcellularLocation>
</comment>
<comment type="similarity">
    <text evidence="1">Belongs to the triosephosphate isomerase family.</text>
</comment>